<gene>
    <name evidence="5" type="primary">EPD1</name>
    <name type="ORF">FOIG_03292</name>
</gene>
<dbReference type="EMBL" id="JH658275">
    <property type="protein sequence ID" value="EXM06523.1"/>
    <property type="molecule type" value="Genomic_DNA"/>
</dbReference>
<dbReference type="VEuPathDB" id="FungiDB:FOIG_03292"/>
<dbReference type="HOGENOM" id="CLU_001932_0_0_1"/>
<dbReference type="OrthoDB" id="1331806at2759"/>
<dbReference type="Proteomes" id="UP000030685">
    <property type="component" value="Unassembled WGS sequence"/>
</dbReference>
<dbReference type="GO" id="GO:0031410">
    <property type="term" value="C:cytoplasmic vesicle"/>
    <property type="evidence" value="ECO:0007669"/>
    <property type="project" value="TreeGrafter"/>
</dbReference>
<dbReference type="GO" id="GO:0005576">
    <property type="term" value="C:extracellular region"/>
    <property type="evidence" value="ECO:0007669"/>
    <property type="project" value="UniProtKB-SubCell"/>
</dbReference>
<dbReference type="GO" id="GO:0043657">
    <property type="term" value="C:host cell"/>
    <property type="evidence" value="ECO:0007669"/>
    <property type="project" value="UniProtKB-SubCell"/>
</dbReference>
<dbReference type="GO" id="GO:0046872">
    <property type="term" value="F:metal ion binding"/>
    <property type="evidence" value="ECO:0007669"/>
    <property type="project" value="UniProtKB-KW"/>
</dbReference>
<dbReference type="GO" id="GO:0032483">
    <property type="term" value="P:regulation of Rab protein signal transduction"/>
    <property type="evidence" value="ECO:0007669"/>
    <property type="project" value="TreeGrafter"/>
</dbReference>
<dbReference type="CDD" id="cd00029">
    <property type="entry name" value="C1"/>
    <property type="match status" value="1"/>
</dbReference>
<dbReference type="Gene3D" id="3.40.50.11500">
    <property type="match status" value="1"/>
</dbReference>
<dbReference type="InterPro" id="IPR046349">
    <property type="entry name" value="C1-like_sf"/>
</dbReference>
<dbReference type="InterPro" id="IPR001194">
    <property type="entry name" value="cDENN_dom"/>
</dbReference>
<dbReference type="InterPro" id="IPR005112">
    <property type="entry name" value="dDENN_dom"/>
</dbReference>
<dbReference type="InterPro" id="IPR043153">
    <property type="entry name" value="DENN_C"/>
</dbReference>
<dbReference type="InterPro" id="IPR051696">
    <property type="entry name" value="DENN_Domain_GEFs"/>
</dbReference>
<dbReference type="InterPro" id="IPR002219">
    <property type="entry name" value="PE/DAG-bd"/>
</dbReference>
<dbReference type="InterPro" id="IPR037516">
    <property type="entry name" value="Tripartite_DENN"/>
</dbReference>
<dbReference type="InterPro" id="IPR005113">
    <property type="entry name" value="uDENN_dom"/>
</dbReference>
<dbReference type="PANTHER" id="PTHR12296:SF21">
    <property type="entry name" value="DENN DOMAIN-CONTAINING PROTEIN 3"/>
    <property type="match status" value="1"/>
</dbReference>
<dbReference type="PANTHER" id="PTHR12296">
    <property type="entry name" value="DENN DOMAIN-CONTAINING PROTEIN 4"/>
    <property type="match status" value="1"/>
</dbReference>
<dbReference type="Pfam" id="PF03455">
    <property type="entry name" value="dDENN"/>
    <property type="match status" value="1"/>
</dbReference>
<dbReference type="Pfam" id="PF02141">
    <property type="entry name" value="DENN"/>
    <property type="match status" value="1"/>
</dbReference>
<dbReference type="Pfam" id="PF03456">
    <property type="entry name" value="uDENN"/>
    <property type="match status" value="1"/>
</dbReference>
<dbReference type="SMART" id="SM00801">
    <property type="entry name" value="dDENN"/>
    <property type="match status" value="1"/>
</dbReference>
<dbReference type="SMART" id="SM00799">
    <property type="entry name" value="DENN"/>
    <property type="match status" value="1"/>
</dbReference>
<dbReference type="SMART" id="SM00800">
    <property type="entry name" value="uDENN"/>
    <property type="match status" value="1"/>
</dbReference>
<dbReference type="SUPFAM" id="SSF57889">
    <property type="entry name" value="Cysteine-rich domain"/>
    <property type="match status" value="1"/>
</dbReference>
<dbReference type="PROSITE" id="PS50211">
    <property type="entry name" value="DENN"/>
    <property type="match status" value="1"/>
</dbReference>
<dbReference type="PROSITE" id="PS50081">
    <property type="entry name" value="ZF_DAG_PE_2"/>
    <property type="match status" value="1"/>
</dbReference>
<protein>
    <recommendedName>
        <fullName evidence="5">Elicitor of plant defense protein 1</fullName>
    </recommendedName>
</protein>
<comment type="function">
    <text evidence="4">Acts as an elicitor that triggers cell death and defense responses in the host plants.</text>
</comment>
<comment type="subcellular location">
    <subcellularLocation>
        <location evidence="7">Secreted</location>
    </subcellularLocation>
    <subcellularLocation>
        <location evidence="7">Host cell</location>
    </subcellularLocation>
</comment>
<comment type="disruption phenotype">
    <text evidence="4">Enhances virulence of the pathogen towards Nicotiana benthamiana.</text>
</comment>
<comment type="similarity">
    <text evidence="6">Belongs to the EPD1 elicitor family.</text>
</comment>
<reference key="1">
    <citation type="submission" date="2011-11" db="EMBL/GenBank/DDBJ databases">
        <title>The Genome Sequence of Fusarium oxysporum II5.</title>
        <authorList>
            <consortium name="The Broad Institute Genome Sequencing Platform"/>
            <person name="Ma L.-J."/>
            <person name="Gale L.R."/>
            <person name="Schwartz D.C."/>
            <person name="Zhou S."/>
            <person name="Corby-Kistler H."/>
            <person name="Young S.K."/>
            <person name="Zeng Q."/>
            <person name="Gargeya S."/>
            <person name="Fitzgerald M."/>
            <person name="Haas B."/>
            <person name="Abouelleil A."/>
            <person name="Alvarado L."/>
            <person name="Arachchi H.M."/>
            <person name="Berlin A."/>
            <person name="Brown A."/>
            <person name="Chapman S.B."/>
            <person name="Chen Z."/>
            <person name="Dunbar C."/>
            <person name="Freedman E."/>
            <person name="Gearin G."/>
            <person name="Goldberg J."/>
            <person name="Griggs A."/>
            <person name="Gujja S."/>
            <person name="Heiman D."/>
            <person name="Howarth C."/>
            <person name="Larson L."/>
            <person name="Lui A."/>
            <person name="MacDonald P.J.P."/>
            <person name="Montmayeur A."/>
            <person name="Murphy C."/>
            <person name="Neiman D."/>
            <person name="Pearson M."/>
            <person name="Priest M."/>
            <person name="Roberts A."/>
            <person name="Saif S."/>
            <person name="Shea T."/>
            <person name="Shenoy N."/>
            <person name="Sisk P."/>
            <person name="Stolte C."/>
            <person name="Sykes S."/>
            <person name="Wortman J."/>
            <person name="Nusbaum C."/>
            <person name="Birren B."/>
        </authorList>
    </citation>
    <scope>NUCLEOTIDE SEQUENCE [LARGE SCALE GENOMIC DNA]</scope>
    <source>
        <strain>NRRL 54006</strain>
    </source>
</reference>
<reference key="2">
    <citation type="journal article" date="2025" name="Adv. Sci.">
        <title>Recognition of a fungal effector potentiates pathogen-associated molecular pattern-triggered immunity in cotton.</title>
        <authorList>
            <person name="Sun L."/>
            <person name="Li X."/>
            <person name="Zhong J."/>
            <person name="Wang Y."/>
            <person name="Li B."/>
            <person name="Ye Z."/>
            <person name="Zhang J."/>
        </authorList>
    </citation>
    <scope>FUNCTION</scope>
    <scope>DISRUPTION PHENOTYPE</scope>
</reference>
<keyword id="KW-0479">Metal-binding</keyword>
<keyword id="KW-0964">Secreted</keyword>
<keyword id="KW-0843">Virulence</keyword>
<keyword id="KW-0862">Zinc</keyword>
<keyword id="KW-0863">Zinc-finger</keyword>
<organism>
    <name type="scientific">Fusarium odoratissimum (strain NRRL 54006)</name>
    <dbReference type="NCBI Taxonomy" id="1089451"/>
    <lineage>
        <taxon>Eukaryota</taxon>
        <taxon>Fungi</taxon>
        <taxon>Dikarya</taxon>
        <taxon>Ascomycota</taxon>
        <taxon>Pezizomycotina</taxon>
        <taxon>Sordariomycetes</taxon>
        <taxon>Hypocreomycetidae</taxon>
        <taxon>Hypocreales</taxon>
        <taxon>Nectriaceae</taxon>
        <taxon>Fusarium</taxon>
        <taxon>Fusarium oxysporum species complex</taxon>
        <taxon>Fusarium oxysporum f. sp. cubense (strain race 4)</taxon>
    </lineage>
</organism>
<sequence>MIASIRTTRRLSNYNSVIPPPEPLNTDPDMHPLKRRFEPVLLDRYPPQEATDEITRRGKFPDYVPMFAFPNDIQIVSSDDRPRSTWHGFTMTSDDNSKLYGITIIIWTALNAEVAEEVEKKCEQWRQSHMSEEERELAASLGVRLAGERTHLSQLLAKLPTIPSGSPARERLEDEISTVEEKITLMTDMLRPLRHGAASKIEGLTAGESGLWTPRAYGILGRDAANMSFWKEWLKAIVTPMTDGGVLRIPPSSPSVGRWQPLERYVVNLCTEAFNPLGSKTQVELGVRELRLYARKEADNEIPGSRSIDLYALFRCLSLENIVALFEYAMAESRIIFLSSHTSMLHLACHALANLLYPLKWSSIFIPVLPARLLSALEAPCPYIVGIERRYDRIELPEDDYVLVDLDKDTIDATSQPVRLPRQARRKLMSLLQVAAPHKLRYGVTTGPPPYAMESFPYDAFSTENAALFRSATPKSTLGKWVSQSSSGFGEPDPPNEVLPPLFNAFASAKVDNGKSDRPSTSKSGKTSPQSSVSPVSINFPPMPSTPVSRSDSGFALAATLREKRSGHFGEEKMRRSSSFGIDKHPPYHKPNLPFLNGHQANLSISAISVDSQNSVVGGGSSGGGGYGNGYAPSTYAQSTLAASTIMPSMQIQPVRNTETTVWVEGHCFNWIPKDNTSICNICNDHAEGDGIYKCTGCKIFSHGRCLGHASLVCPEAFHPDRIRAAFVRCLASLLYTYRKYLGRPSKQQKANGQLYAFDMDGFIKSLPHDQHDYATMMRETQCFNEFIHDREMQPANNASIRVFDEIIMAKKARGRSGLSTGLSRLSTIRASHGASTYGGYAPPRGSSNSKIPAWLGDTSDHIWRTASVPLPKGNFPGEYRTVVTRTPARLDRSLMREPRSIQGMPRVEGRGARGLIRKQVPSMLGTTPPT</sequence>
<accession>X0JZ91</accession>
<feature type="chain" id="PRO_0000462187" description="Elicitor of plant defense protein 1">
    <location>
        <begin position="1"/>
        <end position="931"/>
    </location>
</feature>
<feature type="domain" description="uDENN" evidence="2">
    <location>
        <begin position="19"/>
        <end position="277"/>
    </location>
</feature>
<feature type="domain" description="cDENN" evidence="2">
    <location>
        <begin position="301"/>
        <end position="433"/>
    </location>
</feature>
<feature type="domain" description="dDENN" evidence="2">
    <location>
        <begin position="435"/>
        <end position="799"/>
    </location>
</feature>
<feature type="zinc finger region" description="Phorbol-ester/DAG-type" evidence="1">
    <location>
        <begin position="666"/>
        <end position="714"/>
    </location>
</feature>
<feature type="region of interest" description="Disordered" evidence="3">
    <location>
        <begin position="13"/>
        <end position="32"/>
    </location>
</feature>
<feature type="region of interest" description="Disordered" evidence="3">
    <location>
        <begin position="478"/>
        <end position="552"/>
    </location>
</feature>
<feature type="region of interest" description="Disordered" evidence="3">
    <location>
        <begin position="566"/>
        <end position="586"/>
    </location>
</feature>
<feature type="compositionally biased region" description="Polar residues" evidence="3">
    <location>
        <begin position="521"/>
        <end position="537"/>
    </location>
</feature>
<feature type="compositionally biased region" description="Basic and acidic residues" evidence="3">
    <location>
        <begin position="566"/>
        <end position="575"/>
    </location>
</feature>
<name>EPD1_FUSO5</name>
<evidence type="ECO:0000255" key="1">
    <source>
        <dbReference type="PROSITE-ProRule" id="PRU00226"/>
    </source>
</evidence>
<evidence type="ECO:0000255" key="2">
    <source>
        <dbReference type="PROSITE-ProRule" id="PRU00304"/>
    </source>
</evidence>
<evidence type="ECO:0000256" key="3">
    <source>
        <dbReference type="SAM" id="MobiDB-lite"/>
    </source>
</evidence>
<evidence type="ECO:0000269" key="4">
    <source>
    </source>
</evidence>
<evidence type="ECO:0000303" key="5">
    <source>
    </source>
</evidence>
<evidence type="ECO:0000305" key="6"/>
<evidence type="ECO:0000305" key="7">
    <source>
    </source>
</evidence>
<proteinExistence type="inferred from homology"/>